<protein>
    <recommendedName>
        <fullName evidence="1">tRNA uridine(34) hydroxylase</fullName>
        <ecNumber evidence="1">1.14.-.-</ecNumber>
    </recommendedName>
    <alternativeName>
        <fullName evidence="1">tRNA hydroxylation protein O</fullName>
    </alternativeName>
</protein>
<proteinExistence type="inferred from homology"/>
<gene>
    <name evidence="1" type="primary">trhO</name>
    <name type="ordered locus">BQ10070</name>
</gene>
<evidence type="ECO:0000255" key="1">
    <source>
        <dbReference type="HAMAP-Rule" id="MF_00469"/>
    </source>
</evidence>
<comment type="function">
    <text evidence="1">Catalyzes oxygen-dependent 5-hydroxyuridine (ho5U) modification at position 34 in tRNAs.</text>
</comment>
<comment type="catalytic activity">
    <reaction evidence="1">
        <text>uridine(34) in tRNA + AH2 + O2 = 5-hydroxyuridine(34) in tRNA + A + H2O</text>
        <dbReference type="Rhea" id="RHEA:64224"/>
        <dbReference type="Rhea" id="RHEA-COMP:11727"/>
        <dbReference type="Rhea" id="RHEA-COMP:13381"/>
        <dbReference type="ChEBI" id="CHEBI:13193"/>
        <dbReference type="ChEBI" id="CHEBI:15377"/>
        <dbReference type="ChEBI" id="CHEBI:15379"/>
        <dbReference type="ChEBI" id="CHEBI:17499"/>
        <dbReference type="ChEBI" id="CHEBI:65315"/>
        <dbReference type="ChEBI" id="CHEBI:136877"/>
    </reaction>
</comment>
<comment type="similarity">
    <text evidence="1">Belongs to the TrhO family.</text>
</comment>
<dbReference type="EC" id="1.14.-.-" evidence="1"/>
<dbReference type="EMBL" id="BX897700">
    <property type="protein sequence ID" value="CAF26475.1"/>
    <property type="molecule type" value="Genomic_DNA"/>
</dbReference>
<dbReference type="RefSeq" id="WP_011179693.1">
    <property type="nucleotide sequence ID" value="NC_005955.1"/>
</dbReference>
<dbReference type="SMR" id="Q6FZ00"/>
<dbReference type="KEGG" id="bqu:BQ10070"/>
<dbReference type="eggNOG" id="COG1054">
    <property type="taxonomic scope" value="Bacteria"/>
</dbReference>
<dbReference type="HOGENOM" id="CLU_038878_0_0_5"/>
<dbReference type="OrthoDB" id="9778326at2"/>
<dbReference type="Proteomes" id="UP000000597">
    <property type="component" value="Chromosome"/>
</dbReference>
<dbReference type="GO" id="GO:0016705">
    <property type="term" value="F:oxidoreductase activity, acting on paired donors, with incorporation or reduction of molecular oxygen"/>
    <property type="evidence" value="ECO:0007669"/>
    <property type="project" value="UniProtKB-UniRule"/>
</dbReference>
<dbReference type="GO" id="GO:0006400">
    <property type="term" value="P:tRNA modification"/>
    <property type="evidence" value="ECO:0007669"/>
    <property type="project" value="UniProtKB-UniRule"/>
</dbReference>
<dbReference type="CDD" id="cd01518">
    <property type="entry name" value="RHOD_YceA"/>
    <property type="match status" value="1"/>
</dbReference>
<dbReference type="Gene3D" id="3.30.70.100">
    <property type="match status" value="1"/>
</dbReference>
<dbReference type="Gene3D" id="3.40.250.10">
    <property type="entry name" value="Rhodanese-like domain"/>
    <property type="match status" value="1"/>
</dbReference>
<dbReference type="HAMAP" id="MF_00469">
    <property type="entry name" value="TrhO"/>
    <property type="match status" value="1"/>
</dbReference>
<dbReference type="InterPro" id="IPR001763">
    <property type="entry name" value="Rhodanese-like_dom"/>
</dbReference>
<dbReference type="InterPro" id="IPR036873">
    <property type="entry name" value="Rhodanese-like_dom_sf"/>
</dbReference>
<dbReference type="InterPro" id="IPR020936">
    <property type="entry name" value="TrhO"/>
</dbReference>
<dbReference type="InterPro" id="IPR040503">
    <property type="entry name" value="TRHO_N"/>
</dbReference>
<dbReference type="NCBIfam" id="NF001136">
    <property type="entry name" value="PRK00142.1-4"/>
    <property type="match status" value="1"/>
</dbReference>
<dbReference type="PANTHER" id="PTHR43268:SF3">
    <property type="entry name" value="RHODANESE-LIKE DOMAIN-CONTAINING PROTEIN 7-RELATED"/>
    <property type="match status" value="1"/>
</dbReference>
<dbReference type="PANTHER" id="PTHR43268">
    <property type="entry name" value="THIOSULFATE SULFURTRANSFERASE/RHODANESE-LIKE DOMAIN-CONTAINING PROTEIN 2"/>
    <property type="match status" value="1"/>
</dbReference>
<dbReference type="Pfam" id="PF00581">
    <property type="entry name" value="Rhodanese"/>
    <property type="match status" value="1"/>
</dbReference>
<dbReference type="Pfam" id="PF17773">
    <property type="entry name" value="UPF0176_N"/>
    <property type="match status" value="1"/>
</dbReference>
<dbReference type="SMART" id="SM00450">
    <property type="entry name" value="RHOD"/>
    <property type="match status" value="1"/>
</dbReference>
<dbReference type="SUPFAM" id="SSF52821">
    <property type="entry name" value="Rhodanese/Cell cycle control phosphatase"/>
    <property type="match status" value="1"/>
</dbReference>
<dbReference type="PROSITE" id="PS50206">
    <property type="entry name" value="RHODANESE_3"/>
    <property type="match status" value="1"/>
</dbReference>
<keyword id="KW-0560">Oxidoreductase</keyword>
<keyword id="KW-0819">tRNA processing</keyword>
<organism>
    <name type="scientific">Bartonella quintana (strain Toulouse)</name>
    <name type="common">Rochalimaea quintana</name>
    <dbReference type="NCBI Taxonomy" id="283165"/>
    <lineage>
        <taxon>Bacteria</taxon>
        <taxon>Pseudomonadati</taxon>
        <taxon>Pseudomonadota</taxon>
        <taxon>Alphaproteobacteria</taxon>
        <taxon>Hyphomicrobiales</taxon>
        <taxon>Bartonellaceae</taxon>
        <taxon>Bartonella</taxon>
    </lineage>
</organism>
<sequence length="304" mass="35179">MEKNFKVAALYCFADLKHYRQLQKPLLDLCQAKDIKGTLLLAQEGINGTIAGSCRAIEELVNFIKTEPAFQTPEIKYSWASKMPFHRMKVRLKKEIVTMGVEGINPLKIVGTYVDPEDWNALIQDEETLLIDTRNDYEYAIGSFQGAIDPGIKTFREFPEWVRKHEADLKKKKKMAMFCTGGIRCEKSTAYVRELGYEQVYHLKGGILKYLETIPKEESLWWGECFVFDERVSVKHGLEECGRELCRACRSPLNAEGKLSPHYEAGVSCDACYNKRSEVDRERFRERHRQIQLSKLRAMHSHQE</sequence>
<feature type="chain" id="PRO_0000161446" description="tRNA uridine(34) hydroxylase">
    <location>
        <begin position="1"/>
        <end position="304"/>
    </location>
</feature>
<feature type="domain" description="Rhodanese" evidence="1">
    <location>
        <begin position="124"/>
        <end position="219"/>
    </location>
</feature>
<feature type="active site" description="Cysteine persulfide intermediate" evidence="1">
    <location>
        <position position="179"/>
    </location>
</feature>
<reference key="1">
    <citation type="journal article" date="2004" name="Proc. Natl. Acad. Sci. U.S.A.">
        <title>The louse-borne human pathogen Bartonella quintana is a genomic derivative of the zoonotic agent Bartonella henselae.</title>
        <authorList>
            <person name="Alsmark U.C.M."/>
            <person name="Frank A.C."/>
            <person name="Karlberg E.O."/>
            <person name="Legault B.-A."/>
            <person name="Ardell D.H."/>
            <person name="Canbaeck B."/>
            <person name="Eriksson A.-S."/>
            <person name="Naeslund A.K."/>
            <person name="Handley S.A."/>
            <person name="Huvet M."/>
            <person name="La Scola B."/>
            <person name="Holmberg M."/>
            <person name="Andersson S.G.E."/>
        </authorList>
    </citation>
    <scope>NUCLEOTIDE SEQUENCE [LARGE SCALE GENOMIC DNA]</scope>
    <source>
        <strain>Toulouse</strain>
    </source>
</reference>
<name>TRHO_BARQU</name>
<accession>Q6FZ00</accession>